<protein>
    <recommendedName>
        <fullName evidence="1">Elongation factor P</fullName>
        <shortName evidence="1">EF-P</shortName>
    </recommendedName>
</protein>
<comment type="function">
    <text evidence="1">Involved in peptide bond synthesis. Stimulates efficient translation and peptide-bond synthesis on native or reconstituted 70S ribosomes in vitro. Probably functions indirectly by altering the affinity of the ribosome for aminoacyl-tRNA, thus increasing their reactivity as acceptors for peptidyl transferase.</text>
</comment>
<comment type="pathway">
    <text evidence="1">Protein biosynthesis; polypeptide chain elongation.</text>
</comment>
<comment type="subcellular location">
    <subcellularLocation>
        <location evidence="1">Cytoplasm</location>
    </subcellularLocation>
</comment>
<comment type="similarity">
    <text evidence="1">Belongs to the elongation factor P family.</text>
</comment>
<feature type="chain" id="PRO_0000094204" description="Elongation factor P">
    <location>
        <begin position="1"/>
        <end position="188"/>
    </location>
</feature>
<gene>
    <name evidence="1" type="primary">efp</name>
    <name type="ordered locus">BL0065</name>
</gene>
<evidence type="ECO:0000255" key="1">
    <source>
        <dbReference type="HAMAP-Rule" id="MF_00141"/>
    </source>
</evidence>
<organism>
    <name type="scientific">Bifidobacterium longum (strain NCC 2705)</name>
    <dbReference type="NCBI Taxonomy" id="206672"/>
    <lineage>
        <taxon>Bacteria</taxon>
        <taxon>Bacillati</taxon>
        <taxon>Actinomycetota</taxon>
        <taxon>Actinomycetes</taxon>
        <taxon>Bifidobacteriales</taxon>
        <taxon>Bifidobacteriaceae</taxon>
        <taxon>Bifidobacterium</taxon>
    </lineage>
</organism>
<reference key="1">
    <citation type="journal article" date="2002" name="Proc. Natl. Acad. Sci. U.S.A.">
        <title>The genome sequence of Bifidobacterium longum reflects its adaptation to the human gastrointestinal tract.</title>
        <authorList>
            <person name="Schell M.A."/>
            <person name="Karmirantzou M."/>
            <person name="Snel B."/>
            <person name="Vilanova D."/>
            <person name="Berger B."/>
            <person name="Pessi G."/>
            <person name="Zwahlen M.-C."/>
            <person name="Desiere F."/>
            <person name="Bork P."/>
            <person name="Delley M."/>
            <person name="Pridmore R.D."/>
            <person name="Arigoni F."/>
        </authorList>
    </citation>
    <scope>NUCLEOTIDE SEQUENCE [LARGE SCALE GENOMIC DNA]</scope>
    <source>
        <strain>NCC 2705</strain>
    </source>
</reference>
<name>EFP_BIFLO</name>
<keyword id="KW-0963">Cytoplasm</keyword>
<keyword id="KW-0251">Elongation factor</keyword>
<keyword id="KW-0648">Protein biosynthesis</keyword>
<keyword id="KW-1185">Reference proteome</keyword>
<proteinExistence type="inferred from homology"/>
<sequence>MAQTTNDIKNGSVLNLDGQLWTVMKFQHVKPGKGPAFVRTTIKNVLSGKIVDKTFNAGMKMEFETVDNRTLQYSYEDGDNFVFMDMTTYDQIMVPKTLLGDKAKFLLEGTDCLVSFHDGTPLSVDLPGSVVLTITHTEPGLQGNRSNAGTKPATVETGAEIQVPLFINEGDRVKINTEDGSYTGRENN</sequence>
<accession>Q8G818</accession>
<dbReference type="EMBL" id="AE014295">
    <property type="protein sequence ID" value="AAN23931.1"/>
    <property type="molecule type" value="Genomic_DNA"/>
</dbReference>
<dbReference type="RefSeq" id="NP_695295.1">
    <property type="nucleotide sequence ID" value="NC_004307.2"/>
</dbReference>
<dbReference type="RefSeq" id="WP_007056944.1">
    <property type="nucleotide sequence ID" value="NC_004307.2"/>
</dbReference>
<dbReference type="SMR" id="Q8G818"/>
<dbReference type="STRING" id="206672.BL0065"/>
<dbReference type="EnsemblBacteria" id="AAN23931">
    <property type="protein sequence ID" value="AAN23931"/>
    <property type="gene ID" value="BL0065"/>
</dbReference>
<dbReference type="GeneID" id="69578602"/>
<dbReference type="KEGG" id="blo:BL0065"/>
<dbReference type="PATRIC" id="fig|206672.9.peg.71"/>
<dbReference type="HOGENOM" id="CLU_074944_0_1_11"/>
<dbReference type="OrthoDB" id="9801844at2"/>
<dbReference type="PhylomeDB" id="Q8G818"/>
<dbReference type="UniPathway" id="UPA00345"/>
<dbReference type="Proteomes" id="UP000000439">
    <property type="component" value="Chromosome"/>
</dbReference>
<dbReference type="GO" id="GO:0005737">
    <property type="term" value="C:cytoplasm"/>
    <property type="evidence" value="ECO:0007669"/>
    <property type="project" value="UniProtKB-SubCell"/>
</dbReference>
<dbReference type="GO" id="GO:0003746">
    <property type="term" value="F:translation elongation factor activity"/>
    <property type="evidence" value="ECO:0007669"/>
    <property type="project" value="UniProtKB-UniRule"/>
</dbReference>
<dbReference type="GO" id="GO:0043043">
    <property type="term" value="P:peptide biosynthetic process"/>
    <property type="evidence" value="ECO:0007669"/>
    <property type="project" value="InterPro"/>
</dbReference>
<dbReference type="CDD" id="cd04470">
    <property type="entry name" value="S1_EF-P_repeat_1"/>
    <property type="match status" value="1"/>
</dbReference>
<dbReference type="CDD" id="cd05794">
    <property type="entry name" value="S1_EF-P_repeat_2"/>
    <property type="match status" value="1"/>
</dbReference>
<dbReference type="FunFam" id="2.30.30.30:FF:000003">
    <property type="entry name" value="Elongation factor P"/>
    <property type="match status" value="1"/>
</dbReference>
<dbReference type="FunFam" id="2.40.50.140:FF:000004">
    <property type="entry name" value="Elongation factor P"/>
    <property type="match status" value="1"/>
</dbReference>
<dbReference type="FunFam" id="2.40.50.140:FF:000009">
    <property type="entry name" value="Elongation factor P"/>
    <property type="match status" value="1"/>
</dbReference>
<dbReference type="Gene3D" id="2.30.30.30">
    <property type="match status" value="1"/>
</dbReference>
<dbReference type="Gene3D" id="2.40.50.140">
    <property type="entry name" value="Nucleic acid-binding proteins"/>
    <property type="match status" value="2"/>
</dbReference>
<dbReference type="HAMAP" id="MF_00141">
    <property type="entry name" value="EF_P"/>
    <property type="match status" value="1"/>
</dbReference>
<dbReference type="InterPro" id="IPR015365">
    <property type="entry name" value="Elong-fact-P_C"/>
</dbReference>
<dbReference type="InterPro" id="IPR012340">
    <property type="entry name" value="NA-bd_OB-fold"/>
</dbReference>
<dbReference type="InterPro" id="IPR014722">
    <property type="entry name" value="Rib_uL2_dom2"/>
</dbReference>
<dbReference type="InterPro" id="IPR020599">
    <property type="entry name" value="Transl_elong_fac_P/YeiP"/>
</dbReference>
<dbReference type="InterPro" id="IPR013185">
    <property type="entry name" value="Transl_elong_KOW-like"/>
</dbReference>
<dbReference type="InterPro" id="IPR001059">
    <property type="entry name" value="Transl_elong_P/YeiP_cen"/>
</dbReference>
<dbReference type="InterPro" id="IPR013852">
    <property type="entry name" value="Transl_elong_P/YeiP_CS"/>
</dbReference>
<dbReference type="InterPro" id="IPR011768">
    <property type="entry name" value="Transl_elongation_fac_P"/>
</dbReference>
<dbReference type="InterPro" id="IPR008991">
    <property type="entry name" value="Translation_prot_SH3-like_sf"/>
</dbReference>
<dbReference type="NCBIfam" id="TIGR00038">
    <property type="entry name" value="efp"/>
    <property type="match status" value="1"/>
</dbReference>
<dbReference type="NCBIfam" id="NF001810">
    <property type="entry name" value="PRK00529.1"/>
    <property type="match status" value="1"/>
</dbReference>
<dbReference type="PANTHER" id="PTHR30053">
    <property type="entry name" value="ELONGATION FACTOR P"/>
    <property type="match status" value="1"/>
</dbReference>
<dbReference type="PANTHER" id="PTHR30053:SF12">
    <property type="entry name" value="ELONGATION FACTOR P (EF-P) FAMILY PROTEIN"/>
    <property type="match status" value="1"/>
</dbReference>
<dbReference type="Pfam" id="PF01132">
    <property type="entry name" value="EFP"/>
    <property type="match status" value="1"/>
</dbReference>
<dbReference type="Pfam" id="PF08207">
    <property type="entry name" value="EFP_N"/>
    <property type="match status" value="1"/>
</dbReference>
<dbReference type="Pfam" id="PF09285">
    <property type="entry name" value="Elong-fact-P_C"/>
    <property type="match status" value="1"/>
</dbReference>
<dbReference type="PIRSF" id="PIRSF005901">
    <property type="entry name" value="EF-P"/>
    <property type="match status" value="1"/>
</dbReference>
<dbReference type="SMART" id="SM01185">
    <property type="entry name" value="EFP"/>
    <property type="match status" value="1"/>
</dbReference>
<dbReference type="SMART" id="SM00841">
    <property type="entry name" value="Elong-fact-P_C"/>
    <property type="match status" value="1"/>
</dbReference>
<dbReference type="SUPFAM" id="SSF50249">
    <property type="entry name" value="Nucleic acid-binding proteins"/>
    <property type="match status" value="2"/>
</dbReference>
<dbReference type="SUPFAM" id="SSF50104">
    <property type="entry name" value="Translation proteins SH3-like domain"/>
    <property type="match status" value="1"/>
</dbReference>
<dbReference type="PROSITE" id="PS01275">
    <property type="entry name" value="EFP"/>
    <property type="match status" value="1"/>
</dbReference>